<feature type="chain" id="PRO_0000285287" description="O-phosphoseryl-tRNA(Sec) selenium transferase">
    <location>
        <begin position="1"/>
        <end position="506"/>
    </location>
</feature>
<feature type="region of interest" description="Tetramerization" evidence="2">
    <location>
        <begin position="1"/>
        <end position="44"/>
    </location>
</feature>
<feature type="region of interest" description="Phosphate loop (P-loop)" evidence="2">
    <location>
        <begin position="96"/>
        <end position="106"/>
    </location>
</feature>
<feature type="binding site" evidence="2">
    <location>
        <position position="75"/>
    </location>
    <ligand>
        <name>pyridoxal 5'-phosphate</name>
        <dbReference type="ChEBI" id="CHEBI:597326"/>
    </ligand>
</feature>
<feature type="binding site" evidence="2">
    <location>
        <position position="97"/>
    </location>
    <ligand>
        <name>substrate</name>
    </ligand>
</feature>
<feature type="binding site" evidence="2">
    <location>
        <position position="98"/>
    </location>
    <ligand>
        <name>substrate</name>
    </ligand>
</feature>
<feature type="binding site" evidence="2">
    <location>
        <position position="105"/>
    </location>
    <ligand>
        <name>substrate</name>
    </ligand>
</feature>
<feature type="binding site" evidence="2">
    <location>
        <position position="271"/>
    </location>
    <ligand>
        <name>tRNA</name>
        <dbReference type="ChEBI" id="CHEBI:17843"/>
    </ligand>
    <ligandPart>
        <name>tRNA variable arm</name>
    </ligandPart>
</feature>
<feature type="binding site" evidence="2">
    <location>
        <position position="313"/>
    </location>
    <ligand>
        <name>substrate</name>
    </ligand>
</feature>
<feature type="binding site" evidence="2">
    <location>
        <position position="398"/>
    </location>
    <ligand>
        <name>tRNA</name>
        <dbReference type="ChEBI" id="CHEBI:17843"/>
    </ligand>
    <ligandPart>
        <name>tRNA discriminator base</name>
    </ligandPart>
</feature>
<feature type="binding site" evidence="2">
    <location>
        <position position="463"/>
    </location>
    <ligand>
        <name>tRNA</name>
        <dbReference type="ChEBI" id="CHEBI:17843"/>
    </ligand>
    <ligandPart>
        <name>tRNA acceptor arm</name>
    </ligandPart>
</feature>
<feature type="site" description="May act as a substrate filter by repelling compounds with a negatively charged alpha-carboxylate" evidence="1">
    <location>
        <position position="74"/>
    </location>
</feature>
<feature type="modified residue" description="N6-(pyridoxal phosphate)lysine" evidence="2">
    <location>
        <position position="284"/>
    </location>
</feature>
<name>SPCS_XENTR</name>
<gene>
    <name type="primary">sepsecs</name>
    <name type="ORF">TGas010o23.1</name>
</gene>
<keyword id="KW-0963">Cytoplasm</keyword>
<keyword id="KW-0648">Protein biosynthesis</keyword>
<keyword id="KW-0663">Pyridoxal phosphate</keyword>
<keyword id="KW-1185">Reference proteome</keyword>
<keyword id="KW-0694">RNA-binding</keyword>
<keyword id="KW-0711">Selenium</keyword>
<keyword id="KW-0808">Transferase</keyword>
<keyword id="KW-0820">tRNA-binding</keyword>
<accession>Q28EN2</accession>
<comment type="function">
    <text evidence="2">Converts O-phosphoseryl-tRNA(Sec) to selenocysteinyl-tRNA(Sec) required for selenoprotein biosynthesis.</text>
</comment>
<comment type="catalytic activity">
    <reaction evidence="2">
        <text>O-phospho-L-seryl-tRNA(Sec) + selenophosphate + H2O = L-selenocysteinyl-tRNA(Sec) + 2 phosphate</text>
        <dbReference type="Rhea" id="RHEA:25041"/>
        <dbReference type="Rhea" id="RHEA-COMP:9743"/>
        <dbReference type="Rhea" id="RHEA-COMP:9947"/>
        <dbReference type="ChEBI" id="CHEBI:15377"/>
        <dbReference type="ChEBI" id="CHEBI:16144"/>
        <dbReference type="ChEBI" id="CHEBI:43474"/>
        <dbReference type="ChEBI" id="CHEBI:78551"/>
        <dbReference type="ChEBI" id="CHEBI:78573"/>
        <dbReference type="EC" id="2.9.1.2"/>
    </reaction>
</comment>
<comment type="cofactor">
    <cofactor evidence="2">
        <name>pyridoxal 5'-phosphate</name>
        <dbReference type="ChEBI" id="CHEBI:597326"/>
    </cofactor>
</comment>
<comment type="pathway">
    <text evidence="2">Aminoacyl-tRNA biosynthesis; selenocysteinyl-tRNA(Sec) biosynthesis; selenocysteinyl-tRNA(Sec) from L-seryl-tRNA(Sec) (archaeal/eukaryal route): step 2/2.</text>
</comment>
<comment type="subunit">
    <text evidence="2">Homotetramer formed by a catalytic dimer and a non-catalytic dimer serving as a binding platform that orients tRNASec for catalysis. Each tetramer binds the CCA ends of two tRNAs which point to the active sites of the catalytic dimer.</text>
</comment>
<comment type="subcellular location">
    <subcellularLocation>
        <location evidence="2">Cytoplasm</location>
    </subcellularLocation>
</comment>
<comment type="similarity">
    <text evidence="3">Belongs to the SepSecS family.</text>
</comment>
<protein>
    <recommendedName>
        <fullName>O-phosphoseryl-tRNA(Sec) selenium transferase</fullName>
        <ecNumber evidence="2">2.9.1.2</ecNumber>
    </recommendedName>
    <alternativeName>
        <fullName>Selenocysteine synthase</fullName>
        <shortName>Sec synthase</shortName>
    </alternativeName>
    <alternativeName>
        <fullName>Selenocysteinyl-tRNA(Sec) synthase</fullName>
    </alternativeName>
    <alternativeName>
        <fullName>Sep-tRNA:Sec-tRNA synthase</fullName>
        <shortName>SepSecS</shortName>
    </alternativeName>
    <alternativeName>
        <fullName>UGA suppressor tRNA-associated protein</fullName>
    </alternativeName>
</protein>
<evidence type="ECO:0000250" key="1">
    <source>
        <dbReference type="UniProtKB" id="Q6P6M7"/>
    </source>
</evidence>
<evidence type="ECO:0000250" key="2">
    <source>
        <dbReference type="UniProtKB" id="Q9HD40"/>
    </source>
</evidence>
<evidence type="ECO:0000305" key="3"/>
<sequence length="506" mass="55735">MEHESFKASERLVTPAYIRQGREARRMHEQLVRQLVEQGKCPKEPWDESTIEIFLNELAVMDSNNFLGNCGVGEREGRVASGMVSRRHYRLIHGIGRSGDISAIQPKAAGSSVLNKLTNSMVLDIIRLAGVRTASSCFVVPMATGMSLTLCFLTLRHKRPKAKYIIWPRIDQKSCFKSMITAGFEPVVIENVLEGDELRTDLDAVEAKITELGAENILCVHSTTSCFAPRVPDRVEELAVICKKYEIPHVVNNAYGVQSSKCMHLIQQGARVGRIDAFVQSLDKNFMVPVGGAVIAGFSDSFVQEISKMYPGRASASPSLDVLITLLSLGASGYNKLLKERKEMFVYLSSELKKLAKELNERLLETPHNPISLALSLTSLSEQSGSAVTQLGSMLFTRQVSGARVVPLGTSQTINGYVFKGFMSHSNNYPCAYLNAASAICIKKQDVDMFIKRLDKCLRLCKKEKHLAKDEPRCAQQTTEDDVAELAQGLGDVLQGETASELLLSG</sequence>
<dbReference type="EC" id="2.9.1.2" evidence="2"/>
<dbReference type="EMBL" id="CR848159">
    <property type="protein sequence ID" value="CAJ83391.1"/>
    <property type="molecule type" value="mRNA"/>
</dbReference>
<dbReference type="RefSeq" id="NP_001004947.2">
    <property type="nucleotide sequence ID" value="NM_001004947.2"/>
</dbReference>
<dbReference type="SMR" id="Q28EN2"/>
<dbReference type="FunCoup" id="Q28EN2">
    <property type="interactions" value="2646"/>
</dbReference>
<dbReference type="STRING" id="8364.ENSXETP00000041030"/>
<dbReference type="DNASU" id="448354"/>
<dbReference type="GeneID" id="448354"/>
<dbReference type="KEGG" id="xtr:448354"/>
<dbReference type="AGR" id="Xenbase:XB-GENE-962222"/>
<dbReference type="CTD" id="51091"/>
<dbReference type="Xenbase" id="XB-GENE-962222">
    <property type="gene designation" value="sepsecs"/>
</dbReference>
<dbReference type="InParanoid" id="Q28EN2"/>
<dbReference type="OMA" id="MSHANDY"/>
<dbReference type="OrthoDB" id="10263545at2759"/>
<dbReference type="UniPathway" id="UPA00906">
    <property type="reaction ID" value="UER00898"/>
</dbReference>
<dbReference type="Proteomes" id="UP000008143">
    <property type="component" value="Chromosome 1"/>
</dbReference>
<dbReference type="GO" id="GO:0005737">
    <property type="term" value="C:cytoplasm"/>
    <property type="evidence" value="ECO:0007669"/>
    <property type="project" value="UniProtKB-SubCell"/>
</dbReference>
<dbReference type="GO" id="GO:0098621">
    <property type="term" value="F:O-phosphoseryl-tRNA(Sec) selenium transferase activity"/>
    <property type="evidence" value="ECO:0007669"/>
    <property type="project" value="UniProtKB-EC"/>
</dbReference>
<dbReference type="GO" id="GO:0000049">
    <property type="term" value="F:tRNA binding"/>
    <property type="evidence" value="ECO:0007669"/>
    <property type="project" value="UniProtKB-KW"/>
</dbReference>
<dbReference type="GO" id="GO:0001717">
    <property type="term" value="P:conversion of seryl-tRNAsec to selenocys-tRNAsec"/>
    <property type="evidence" value="ECO:0007669"/>
    <property type="project" value="InterPro"/>
</dbReference>
<dbReference type="GO" id="GO:0006412">
    <property type="term" value="P:translation"/>
    <property type="evidence" value="ECO:0007669"/>
    <property type="project" value="UniProtKB-KW"/>
</dbReference>
<dbReference type="FunFam" id="3.40.640.10:FF:000070">
    <property type="entry name" value="O-phosphoseryl-tRNA(Sec) selenium transferase"/>
    <property type="match status" value="1"/>
</dbReference>
<dbReference type="Gene3D" id="3.40.640.10">
    <property type="entry name" value="Type I PLP-dependent aspartate aminotransferase-like (Major domain)"/>
    <property type="match status" value="1"/>
</dbReference>
<dbReference type="InterPro" id="IPR015424">
    <property type="entry name" value="PyrdxlP-dep_Trfase"/>
</dbReference>
<dbReference type="InterPro" id="IPR015421">
    <property type="entry name" value="PyrdxlP-dep_Trfase_major"/>
</dbReference>
<dbReference type="InterPro" id="IPR019872">
    <property type="entry name" value="Sec-tRNA_Se_transferase"/>
</dbReference>
<dbReference type="InterPro" id="IPR008829">
    <property type="entry name" value="SepSecS/SepCysS"/>
</dbReference>
<dbReference type="NCBIfam" id="TIGR03531">
    <property type="entry name" value="selenium_SpcS"/>
    <property type="match status" value="1"/>
</dbReference>
<dbReference type="PANTHER" id="PTHR12944:SF2">
    <property type="entry name" value="O-PHOSPHOSERYL-TRNA(SEC) SELENIUM TRANSFERASE"/>
    <property type="match status" value="1"/>
</dbReference>
<dbReference type="PANTHER" id="PTHR12944">
    <property type="entry name" value="SOLUBLE LIVER ANTIGEN/LIVER PANCREAS ANTIGEN"/>
    <property type="match status" value="1"/>
</dbReference>
<dbReference type="Pfam" id="PF05889">
    <property type="entry name" value="SepSecS"/>
    <property type="match status" value="1"/>
</dbReference>
<dbReference type="PIRSF" id="PIRSF017689">
    <property type="entry name" value="SepSecS"/>
    <property type="match status" value="1"/>
</dbReference>
<dbReference type="SUPFAM" id="SSF53383">
    <property type="entry name" value="PLP-dependent transferases"/>
    <property type="match status" value="1"/>
</dbReference>
<organism>
    <name type="scientific">Xenopus tropicalis</name>
    <name type="common">Western clawed frog</name>
    <name type="synonym">Silurana tropicalis</name>
    <dbReference type="NCBI Taxonomy" id="8364"/>
    <lineage>
        <taxon>Eukaryota</taxon>
        <taxon>Metazoa</taxon>
        <taxon>Chordata</taxon>
        <taxon>Craniata</taxon>
        <taxon>Vertebrata</taxon>
        <taxon>Euteleostomi</taxon>
        <taxon>Amphibia</taxon>
        <taxon>Batrachia</taxon>
        <taxon>Anura</taxon>
        <taxon>Pipoidea</taxon>
        <taxon>Pipidae</taxon>
        <taxon>Xenopodinae</taxon>
        <taxon>Xenopus</taxon>
        <taxon>Silurana</taxon>
    </lineage>
</organism>
<proteinExistence type="evidence at transcript level"/>
<reference key="1">
    <citation type="submission" date="2006-10" db="EMBL/GenBank/DDBJ databases">
        <authorList>
            <consortium name="Sanger Xenopus tropicalis EST/cDNA project"/>
        </authorList>
    </citation>
    <scope>NUCLEOTIDE SEQUENCE [LARGE SCALE MRNA]</scope>
    <source>
        <tissue>Gastrula</tissue>
    </source>
</reference>